<feature type="chain" id="PRO_0000138483" description="UPF0145 protein SCO3412">
    <location>
        <begin position="1"/>
        <end position="106"/>
    </location>
</feature>
<reference key="1">
    <citation type="journal article" date="2002" name="Nature">
        <title>Complete genome sequence of the model actinomycete Streptomyces coelicolor A3(2).</title>
        <authorList>
            <person name="Bentley S.D."/>
            <person name="Chater K.F."/>
            <person name="Cerdeno-Tarraga A.-M."/>
            <person name="Challis G.L."/>
            <person name="Thomson N.R."/>
            <person name="James K.D."/>
            <person name="Harris D.E."/>
            <person name="Quail M.A."/>
            <person name="Kieser H."/>
            <person name="Harper D."/>
            <person name="Bateman A."/>
            <person name="Brown S."/>
            <person name="Chandra G."/>
            <person name="Chen C.W."/>
            <person name="Collins M."/>
            <person name="Cronin A."/>
            <person name="Fraser A."/>
            <person name="Goble A."/>
            <person name="Hidalgo J."/>
            <person name="Hornsby T."/>
            <person name="Howarth S."/>
            <person name="Huang C.-H."/>
            <person name="Kieser T."/>
            <person name="Larke L."/>
            <person name="Murphy L.D."/>
            <person name="Oliver K."/>
            <person name="O'Neil S."/>
            <person name="Rabbinowitsch E."/>
            <person name="Rajandream M.A."/>
            <person name="Rutherford K.M."/>
            <person name="Rutter S."/>
            <person name="Seeger K."/>
            <person name="Saunders D."/>
            <person name="Sharp S."/>
            <person name="Squares R."/>
            <person name="Squares S."/>
            <person name="Taylor K."/>
            <person name="Warren T."/>
            <person name="Wietzorrek A."/>
            <person name="Woodward J.R."/>
            <person name="Barrell B.G."/>
            <person name="Parkhill J."/>
            <person name="Hopwood D.A."/>
        </authorList>
    </citation>
    <scope>NUCLEOTIDE SEQUENCE [LARGE SCALE GENOMIC DNA]</scope>
    <source>
        <strain>ATCC BAA-471 / A3(2) / M145</strain>
    </source>
</reference>
<proteinExistence type="inferred from homology"/>
<dbReference type="EMBL" id="AL939116">
    <property type="protein sequence ID" value="CAB42765.1"/>
    <property type="molecule type" value="Genomic_DNA"/>
</dbReference>
<dbReference type="PIR" id="T36338">
    <property type="entry name" value="T36338"/>
</dbReference>
<dbReference type="RefSeq" id="NP_627618.1">
    <property type="nucleotide sequence ID" value="NC_003888.3"/>
</dbReference>
<dbReference type="SMR" id="Q9X8J2"/>
<dbReference type="STRING" id="100226.gene:17761034"/>
<dbReference type="PaxDb" id="100226-SCO3412"/>
<dbReference type="KEGG" id="sco:SCO3412"/>
<dbReference type="PATRIC" id="fig|100226.15.peg.3475"/>
<dbReference type="eggNOG" id="COG0393">
    <property type="taxonomic scope" value="Bacteria"/>
</dbReference>
<dbReference type="HOGENOM" id="CLU_117144_1_1_11"/>
<dbReference type="InParanoid" id="Q9X8J2"/>
<dbReference type="OrthoDB" id="9796448at2"/>
<dbReference type="PhylomeDB" id="Q9X8J2"/>
<dbReference type="Proteomes" id="UP000001973">
    <property type="component" value="Chromosome"/>
</dbReference>
<dbReference type="Gene3D" id="3.30.110.70">
    <property type="entry name" value="Hypothetical protein apc22750. Chain B"/>
    <property type="match status" value="1"/>
</dbReference>
<dbReference type="HAMAP" id="MF_00338">
    <property type="entry name" value="UPF0145"/>
    <property type="match status" value="1"/>
</dbReference>
<dbReference type="InterPro" id="IPR035439">
    <property type="entry name" value="UPF0145_dom_sf"/>
</dbReference>
<dbReference type="InterPro" id="IPR002765">
    <property type="entry name" value="UPF0145_YbjQ-like"/>
</dbReference>
<dbReference type="PANTHER" id="PTHR34068:SF2">
    <property type="entry name" value="UPF0145 PROTEIN SCO3412"/>
    <property type="match status" value="1"/>
</dbReference>
<dbReference type="PANTHER" id="PTHR34068">
    <property type="entry name" value="UPF0145 PROTEIN YBJQ"/>
    <property type="match status" value="1"/>
</dbReference>
<dbReference type="Pfam" id="PF01906">
    <property type="entry name" value="YbjQ_1"/>
    <property type="match status" value="1"/>
</dbReference>
<dbReference type="SUPFAM" id="SSF117782">
    <property type="entry name" value="YbjQ-like"/>
    <property type="match status" value="1"/>
</dbReference>
<protein>
    <recommendedName>
        <fullName>UPF0145 protein SCO3412</fullName>
    </recommendedName>
</protein>
<keyword id="KW-1185">Reference proteome</keyword>
<comment type="similarity">
    <text evidence="1">Belongs to the UPF0145 family.</text>
</comment>
<organism>
    <name type="scientific">Streptomyces coelicolor (strain ATCC BAA-471 / A3(2) / M145)</name>
    <dbReference type="NCBI Taxonomy" id="100226"/>
    <lineage>
        <taxon>Bacteria</taxon>
        <taxon>Bacillati</taxon>
        <taxon>Actinomycetota</taxon>
        <taxon>Actinomycetes</taxon>
        <taxon>Kitasatosporales</taxon>
        <taxon>Streptomycetaceae</taxon>
        <taxon>Streptomyces</taxon>
        <taxon>Streptomyces albidoflavus group</taxon>
    </lineage>
</organism>
<sequence>MLVVTTNDLPGHRVQEVLGEVFGLTVRSRHLGSQIGAGLKSLVGGELRGLTKTLVETRNQAMERLVEQARARGANAVLSFRFDVTEAADVGTEVCAYGTAVVVARE</sequence>
<evidence type="ECO:0000305" key="1"/>
<gene>
    <name type="ordered locus">SCO3412</name>
    <name type="ORF">SCE9.19</name>
</gene>
<accession>Q9X8J2</accession>
<name>Y3412_STRCO</name>